<feature type="initiator methionine" description="Removed" evidence="2">
    <location>
        <position position="1"/>
    </location>
</feature>
<feature type="chain" id="PRO_0000308189" description="Carboxymethylenebutenolidase homolog">
    <location>
        <begin position="2"/>
        <end position="245"/>
    </location>
</feature>
<feature type="active site" evidence="1">
    <location>
        <position position="132"/>
    </location>
</feature>
<feature type="active site" evidence="1">
    <location>
        <position position="179"/>
    </location>
</feature>
<feature type="active site" evidence="1">
    <location>
        <position position="212"/>
    </location>
</feature>
<feature type="modified residue" description="N-acetylalanine" evidence="2">
    <location>
        <position position="2"/>
    </location>
</feature>
<feature type="modified residue" description="Phosphoserine" evidence="2">
    <location>
        <position position="223"/>
    </location>
</feature>
<feature type="sequence conflict" description="In Ref. 1; BAC25255." evidence="3" ref="1">
    <original>D</original>
    <variation>V</variation>
    <location>
        <position position="40"/>
    </location>
</feature>
<feature type="sequence conflict" description="In Ref. 1; BAC25255." evidence="3" ref="1">
    <original>D</original>
    <variation>V</variation>
    <location>
        <position position="50"/>
    </location>
</feature>
<feature type="sequence conflict" description="In Ref. 1; BAC25255." evidence="3" ref="1">
    <original>K</original>
    <variation>I</variation>
    <location>
        <position position="99"/>
    </location>
</feature>
<reference key="1">
    <citation type="journal article" date="2005" name="Science">
        <title>The transcriptional landscape of the mammalian genome.</title>
        <authorList>
            <person name="Carninci P."/>
            <person name="Kasukawa T."/>
            <person name="Katayama S."/>
            <person name="Gough J."/>
            <person name="Frith M.C."/>
            <person name="Maeda N."/>
            <person name="Oyama R."/>
            <person name="Ravasi T."/>
            <person name="Lenhard B."/>
            <person name="Wells C."/>
            <person name="Kodzius R."/>
            <person name="Shimokawa K."/>
            <person name="Bajic V.B."/>
            <person name="Brenner S.E."/>
            <person name="Batalov S."/>
            <person name="Forrest A.R."/>
            <person name="Zavolan M."/>
            <person name="Davis M.J."/>
            <person name="Wilming L.G."/>
            <person name="Aidinis V."/>
            <person name="Allen J.E."/>
            <person name="Ambesi-Impiombato A."/>
            <person name="Apweiler R."/>
            <person name="Aturaliya R.N."/>
            <person name="Bailey T.L."/>
            <person name="Bansal M."/>
            <person name="Baxter L."/>
            <person name="Beisel K.W."/>
            <person name="Bersano T."/>
            <person name="Bono H."/>
            <person name="Chalk A.M."/>
            <person name="Chiu K.P."/>
            <person name="Choudhary V."/>
            <person name="Christoffels A."/>
            <person name="Clutterbuck D.R."/>
            <person name="Crowe M.L."/>
            <person name="Dalla E."/>
            <person name="Dalrymple B.P."/>
            <person name="de Bono B."/>
            <person name="Della Gatta G."/>
            <person name="di Bernardo D."/>
            <person name="Down T."/>
            <person name="Engstrom P."/>
            <person name="Fagiolini M."/>
            <person name="Faulkner G."/>
            <person name="Fletcher C.F."/>
            <person name="Fukushima T."/>
            <person name="Furuno M."/>
            <person name="Futaki S."/>
            <person name="Gariboldi M."/>
            <person name="Georgii-Hemming P."/>
            <person name="Gingeras T.R."/>
            <person name="Gojobori T."/>
            <person name="Green R.E."/>
            <person name="Gustincich S."/>
            <person name="Harbers M."/>
            <person name="Hayashi Y."/>
            <person name="Hensch T.K."/>
            <person name="Hirokawa N."/>
            <person name="Hill D."/>
            <person name="Huminiecki L."/>
            <person name="Iacono M."/>
            <person name="Ikeo K."/>
            <person name="Iwama A."/>
            <person name="Ishikawa T."/>
            <person name="Jakt M."/>
            <person name="Kanapin A."/>
            <person name="Katoh M."/>
            <person name="Kawasawa Y."/>
            <person name="Kelso J."/>
            <person name="Kitamura H."/>
            <person name="Kitano H."/>
            <person name="Kollias G."/>
            <person name="Krishnan S.P."/>
            <person name="Kruger A."/>
            <person name="Kummerfeld S.K."/>
            <person name="Kurochkin I.V."/>
            <person name="Lareau L.F."/>
            <person name="Lazarevic D."/>
            <person name="Lipovich L."/>
            <person name="Liu J."/>
            <person name="Liuni S."/>
            <person name="McWilliam S."/>
            <person name="Madan Babu M."/>
            <person name="Madera M."/>
            <person name="Marchionni L."/>
            <person name="Matsuda H."/>
            <person name="Matsuzawa S."/>
            <person name="Miki H."/>
            <person name="Mignone F."/>
            <person name="Miyake S."/>
            <person name="Morris K."/>
            <person name="Mottagui-Tabar S."/>
            <person name="Mulder N."/>
            <person name="Nakano N."/>
            <person name="Nakauchi H."/>
            <person name="Ng P."/>
            <person name="Nilsson R."/>
            <person name="Nishiguchi S."/>
            <person name="Nishikawa S."/>
            <person name="Nori F."/>
            <person name="Ohara O."/>
            <person name="Okazaki Y."/>
            <person name="Orlando V."/>
            <person name="Pang K.C."/>
            <person name="Pavan W.J."/>
            <person name="Pavesi G."/>
            <person name="Pesole G."/>
            <person name="Petrovsky N."/>
            <person name="Piazza S."/>
            <person name="Reed J."/>
            <person name="Reid J.F."/>
            <person name="Ring B.Z."/>
            <person name="Ringwald M."/>
            <person name="Rost B."/>
            <person name="Ruan Y."/>
            <person name="Salzberg S.L."/>
            <person name="Sandelin A."/>
            <person name="Schneider C."/>
            <person name="Schoenbach C."/>
            <person name="Sekiguchi K."/>
            <person name="Semple C.A."/>
            <person name="Seno S."/>
            <person name="Sessa L."/>
            <person name="Sheng Y."/>
            <person name="Shibata Y."/>
            <person name="Shimada H."/>
            <person name="Shimada K."/>
            <person name="Silva D."/>
            <person name="Sinclair B."/>
            <person name="Sperling S."/>
            <person name="Stupka E."/>
            <person name="Sugiura K."/>
            <person name="Sultana R."/>
            <person name="Takenaka Y."/>
            <person name="Taki K."/>
            <person name="Tammoja K."/>
            <person name="Tan S.L."/>
            <person name="Tang S."/>
            <person name="Taylor M.S."/>
            <person name="Tegner J."/>
            <person name="Teichmann S.A."/>
            <person name="Ueda H.R."/>
            <person name="van Nimwegen E."/>
            <person name="Verardo R."/>
            <person name="Wei C.L."/>
            <person name="Yagi K."/>
            <person name="Yamanishi H."/>
            <person name="Zabarovsky E."/>
            <person name="Zhu S."/>
            <person name="Zimmer A."/>
            <person name="Hide W."/>
            <person name="Bult C."/>
            <person name="Grimmond S.M."/>
            <person name="Teasdale R.D."/>
            <person name="Liu E.T."/>
            <person name="Brusic V."/>
            <person name="Quackenbush J."/>
            <person name="Wahlestedt C."/>
            <person name="Mattick J.S."/>
            <person name="Hume D.A."/>
            <person name="Kai C."/>
            <person name="Sasaki D."/>
            <person name="Tomaru Y."/>
            <person name="Fukuda S."/>
            <person name="Kanamori-Katayama M."/>
            <person name="Suzuki M."/>
            <person name="Aoki J."/>
            <person name="Arakawa T."/>
            <person name="Iida J."/>
            <person name="Imamura K."/>
            <person name="Itoh M."/>
            <person name="Kato T."/>
            <person name="Kawaji H."/>
            <person name="Kawagashira N."/>
            <person name="Kawashima T."/>
            <person name="Kojima M."/>
            <person name="Kondo S."/>
            <person name="Konno H."/>
            <person name="Nakano K."/>
            <person name="Ninomiya N."/>
            <person name="Nishio T."/>
            <person name="Okada M."/>
            <person name="Plessy C."/>
            <person name="Shibata K."/>
            <person name="Shiraki T."/>
            <person name="Suzuki S."/>
            <person name="Tagami M."/>
            <person name="Waki K."/>
            <person name="Watahiki A."/>
            <person name="Okamura-Oho Y."/>
            <person name="Suzuki H."/>
            <person name="Kawai J."/>
            <person name="Hayashizaki Y."/>
        </authorList>
    </citation>
    <scope>NUCLEOTIDE SEQUENCE [LARGE SCALE MRNA]</scope>
    <source>
        <strain>C57BL/6J</strain>
        <tissue>Tongue</tissue>
    </source>
</reference>
<reference key="2">
    <citation type="journal article" date="2004" name="Genome Res.">
        <title>The status, quality, and expansion of the NIH full-length cDNA project: the Mammalian Gene Collection (MGC).</title>
        <authorList>
            <consortium name="The MGC Project Team"/>
        </authorList>
    </citation>
    <scope>NUCLEOTIDE SEQUENCE [LARGE SCALE MRNA]</scope>
    <source>
        <strain>FVB/N</strain>
        <tissue>Kidney</tissue>
    </source>
</reference>
<reference key="3">
    <citation type="journal article" date="2010" name="Cell">
        <title>A tissue-specific atlas of mouse protein phosphorylation and expression.</title>
        <authorList>
            <person name="Huttlin E.L."/>
            <person name="Jedrychowski M.P."/>
            <person name="Elias J.E."/>
            <person name="Goswami T."/>
            <person name="Rad R."/>
            <person name="Beausoleil S.A."/>
            <person name="Villen J."/>
            <person name="Haas W."/>
            <person name="Sowa M.E."/>
            <person name="Gygi S.P."/>
        </authorList>
    </citation>
    <scope>IDENTIFICATION BY MASS SPECTROMETRY [LARGE SCALE ANALYSIS]</scope>
    <source>
        <tissue>Brain</tissue>
        <tissue>Brown adipose tissue</tissue>
        <tissue>Heart</tissue>
        <tissue>Kidney</tissue>
        <tissue>Liver</tissue>
        <tissue>Lung</tissue>
        <tissue>Spleen</tissue>
        <tissue>Testis</tissue>
    </source>
</reference>
<name>CMBL_MOUSE</name>
<keyword id="KW-0007">Acetylation</keyword>
<keyword id="KW-0963">Cytoplasm</keyword>
<keyword id="KW-0378">Hydrolase</keyword>
<keyword id="KW-0597">Phosphoprotein</keyword>
<keyword id="KW-1185">Reference proteome</keyword>
<gene>
    <name type="primary">Cmbl</name>
</gene>
<organism>
    <name type="scientific">Mus musculus</name>
    <name type="common">Mouse</name>
    <dbReference type="NCBI Taxonomy" id="10090"/>
    <lineage>
        <taxon>Eukaryota</taxon>
        <taxon>Metazoa</taxon>
        <taxon>Chordata</taxon>
        <taxon>Craniata</taxon>
        <taxon>Vertebrata</taxon>
        <taxon>Euteleostomi</taxon>
        <taxon>Mammalia</taxon>
        <taxon>Eutheria</taxon>
        <taxon>Euarchontoglires</taxon>
        <taxon>Glires</taxon>
        <taxon>Rodentia</taxon>
        <taxon>Myomorpha</taxon>
        <taxon>Muroidea</taxon>
        <taxon>Muridae</taxon>
        <taxon>Murinae</taxon>
        <taxon>Mus</taxon>
        <taxon>Mus</taxon>
    </lineage>
</organism>
<dbReference type="EC" id="3.1.-.-"/>
<dbReference type="EMBL" id="AK009374">
    <property type="protein sequence ID" value="BAC25255.1"/>
    <property type="status" value="ALT_FRAME"/>
    <property type="molecule type" value="mRNA"/>
</dbReference>
<dbReference type="EMBL" id="BC024580">
    <property type="protein sequence ID" value="AAH24580.1"/>
    <property type="molecule type" value="mRNA"/>
</dbReference>
<dbReference type="CCDS" id="CCDS27410.1"/>
<dbReference type="RefSeq" id="NP_853619.1">
    <property type="nucleotide sequence ID" value="NM_181588.4"/>
</dbReference>
<dbReference type="RefSeq" id="XP_006520239.1">
    <property type="nucleotide sequence ID" value="XM_006520176.4"/>
</dbReference>
<dbReference type="RefSeq" id="XP_006520240.1">
    <property type="nucleotide sequence ID" value="XM_006520177.5"/>
</dbReference>
<dbReference type="SMR" id="Q8R1G2"/>
<dbReference type="BioGRID" id="213542">
    <property type="interactions" value="7"/>
</dbReference>
<dbReference type="FunCoup" id="Q8R1G2">
    <property type="interactions" value="543"/>
</dbReference>
<dbReference type="STRING" id="10090.ENSMUSP00000070314"/>
<dbReference type="ESTHER" id="mouse-CMBL">
    <property type="family name" value="CMBL"/>
</dbReference>
<dbReference type="GlyGen" id="Q8R1G2">
    <property type="glycosylation" value="1 site, 1 O-linked glycan (1 site)"/>
</dbReference>
<dbReference type="iPTMnet" id="Q8R1G2"/>
<dbReference type="PhosphoSitePlus" id="Q8R1G2"/>
<dbReference type="SwissPalm" id="Q8R1G2"/>
<dbReference type="jPOST" id="Q8R1G2"/>
<dbReference type="PaxDb" id="10090-ENSMUSP00000070314"/>
<dbReference type="PeptideAtlas" id="Q8R1G2"/>
<dbReference type="ProteomicsDB" id="283388"/>
<dbReference type="Antibodypedia" id="22459">
    <property type="antibodies" value="123 antibodies from 20 providers"/>
</dbReference>
<dbReference type="DNASU" id="69574"/>
<dbReference type="Ensembl" id="ENSMUST00000070918.14">
    <property type="protein sequence ID" value="ENSMUSP00000070314.7"/>
    <property type="gene ID" value="ENSMUSG00000022235.16"/>
</dbReference>
<dbReference type="GeneID" id="69574"/>
<dbReference type="KEGG" id="mmu:69574"/>
<dbReference type="UCSC" id="uc007vki.1">
    <property type="organism name" value="mouse"/>
</dbReference>
<dbReference type="AGR" id="MGI:1916824"/>
<dbReference type="CTD" id="134147"/>
<dbReference type="MGI" id="MGI:1916824">
    <property type="gene designation" value="Cmbl"/>
</dbReference>
<dbReference type="VEuPathDB" id="HostDB:ENSMUSG00000022235"/>
<dbReference type="eggNOG" id="KOG3043">
    <property type="taxonomic scope" value="Eukaryota"/>
</dbReference>
<dbReference type="GeneTree" id="ENSGT00390000000183"/>
<dbReference type="HOGENOM" id="CLU_054590_8_2_1"/>
<dbReference type="InParanoid" id="Q8R1G2"/>
<dbReference type="OMA" id="QCGAKHI"/>
<dbReference type="OrthoDB" id="17560at2759"/>
<dbReference type="PhylomeDB" id="Q8R1G2"/>
<dbReference type="TreeFam" id="TF331795"/>
<dbReference type="BRENDA" id="3.1.1.45">
    <property type="organism ID" value="3474"/>
</dbReference>
<dbReference type="Reactome" id="R-MMU-211945">
    <property type="pathway name" value="Phase I - Functionalization of compounds"/>
</dbReference>
<dbReference type="BioGRID-ORCS" id="69574">
    <property type="hits" value="3 hits in 76 CRISPR screens"/>
</dbReference>
<dbReference type="PRO" id="PR:Q8R1G2"/>
<dbReference type="Proteomes" id="UP000000589">
    <property type="component" value="Chromosome 15"/>
</dbReference>
<dbReference type="RNAct" id="Q8R1G2">
    <property type="molecule type" value="protein"/>
</dbReference>
<dbReference type="Bgee" id="ENSMUSG00000022235">
    <property type="expression patterns" value="Expressed in right kidney and 216 other cell types or tissues"/>
</dbReference>
<dbReference type="ExpressionAtlas" id="Q8R1G2">
    <property type="expression patterns" value="baseline and differential"/>
</dbReference>
<dbReference type="GO" id="GO:0005829">
    <property type="term" value="C:cytosol"/>
    <property type="evidence" value="ECO:0007669"/>
    <property type="project" value="UniProtKB-SubCell"/>
</dbReference>
<dbReference type="GO" id="GO:0016787">
    <property type="term" value="F:hydrolase activity"/>
    <property type="evidence" value="ECO:0007669"/>
    <property type="project" value="UniProtKB-KW"/>
</dbReference>
<dbReference type="FunFam" id="3.40.50.1820:FF:000178">
    <property type="entry name" value="Carboxymethylenebutenolidase homolog"/>
    <property type="match status" value="1"/>
</dbReference>
<dbReference type="Gene3D" id="3.40.50.1820">
    <property type="entry name" value="alpha/beta hydrolase"/>
    <property type="match status" value="1"/>
</dbReference>
<dbReference type="InterPro" id="IPR029058">
    <property type="entry name" value="AB_hydrolase_fold"/>
</dbReference>
<dbReference type="InterPro" id="IPR042946">
    <property type="entry name" value="CMBL"/>
</dbReference>
<dbReference type="InterPro" id="IPR002925">
    <property type="entry name" value="Dienelactn_hydro"/>
</dbReference>
<dbReference type="PANTHER" id="PTHR46812">
    <property type="entry name" value="CARBOXYMETHYLENEBUTENOLIDASE HOMOLOG"/>
    <property type="match status" value="1"/>
</dbReference>
<dbReference type="PANTHER" id="PTHR46812:SF1">
    <property type="entry name" value="CARBOXYMETHYLENEBUTENOLIDASE HOMOLOG"/>
    <property type="match status" value="1"/>
</dbReference>
<dbReference type="Pfam" id="PF01738">
    <property type="entry name" value="DLH"/>
    <property type="match status" value="1"/>
</dbReference>
<dbReference type="SUPFAM" id="SSF53474">
    <property type="entry name" value="alpha/beta-Hydrolases"/>
    <property type="match status" value="1"/>
</dbReference>
<protein>
    <recommendedName>
        <fullName>Carboxymethylenebutenolidase homolog</fullName>
        <ecNumber>3.1.-.-</ecNumber>
    </recommendedName>
</protein>
<comment type="function">
    <text evidence="1">Cysteine hydrolase.</text>
</comment>
<comment type="subcellular location">
    <subcellularLocation>
        <location evidence="1">Cytoplasm</location>
        <location evidence="1">Cytosol</location>
    </subcellularLocation>
</comment>
<comment type="similarity">
    <text evidence="3">Belongs to the dienelactone hydrolase family.</text>
</comment>
<comment type="sequence caution" evidence="3">
    <conflict type="frameshift">
        <sequence resource="EMBL-CDS" id="BAC25255"/>
    </conflict>
</comment>
<sequence length="245" mass="27902">MANEANPCPCDIGHKLEYGGMGHEVQVEHIKAYVTRSPVDAGKAVIVVQDIFGWQLPNTRYMADMIARNGYTTIVPDFFVGQEPWDPAGDWSTFPAWLKSRNARKVNREVDAVLRYLRQQCHAQKIGIVGFCWGGVVVHQVMTAYPDIRAGVSVYGIIRDSEDVYNLKNPTLFIFAENDTVIPLEQVSTLTQKLKEHCIVNYQVKTFSGQTHGFVHRKREDCSPADKPYIEEARRNLIEWLNKYV</sequence>
<evidence type="ECO:0000250" key="1"/>
<evidence type="ECO:0000250" key="2">
    <source>
        <dbReference type="UniProtKB" id="Q96DG6"/>
    </source>
</evidence>
<evidence type="ECO:0000305" key="3"/>
<proteinExistence type="evidence at protein level"/>
<accession>Q8R1G2</accession>
<accession>Q8C1N1</accession>